<protein>
    <recommendedName>
        <fullName evidence="4">Inactive ADP-ribosyltransferase ARH2</fullName>
    </recommendedName>
    <alternativeName>
        <fullName evidence="4">ADP-ribosylhydrolase-like protein 1</fullName>
    </alternativeName>
    <alternativeName>
        <fullName>[Protein ADP-ribosylarginine] hydrolase-like protein 1</fullName>
    </alternativeName>
</protein>
<dbReference type="EMBL" id="AJ427360">
    <property type="protein sequence ID" value="CAD20462.1"/>
    <property type="molecule type" value="mRNA"/>
</dbReference>
<dbReference type="EMBL" id="AK081786">
    <property type="protein sequence ID" value="BAC38332.1"/>
    <property type="status" value="ALT_INIT"/>
    <property type="molecule type" value="mRNA"/>
</dbReference>
<dbReference type="EMBL" id="AK084501">
    <property type="protein sequence ID" value="BAC39199.1"/>
    <property type="molecule type" value="mRNA"/>
</dbReference>
<dbReference type="EMBL" id="BC063759">
    <property type="protein sequence ID" value="AAH63759.1"/>
    <property type="molecule type" value="mRNA"/>
</dbReference>
<dbReference type="CCDS" id="CCDS22108.1"/>
<dbReference type="RefSeq" id="NP_766338.1">
    <property type="nucleotide sequence ID" value="NM_172750.5"/>
</dbReference>
<dbReference type="SMR" id="Q8BGK2"/>
<dbReference type="BioGRID" id="231490">
    <property type="interactions" value="2"/>
</dbReference>
<dbReference type="FunCoup" id="Q8BGK2">
    <property type="interactions" value="6"/>
</dbReference>
<dbReference type="IntAct" id="Q8BGK2">
    <property type="interactions" value="1"/>
</dbReference>
<dbReference type="STRING" id="10090.ENSMUSP00000033825"/>
<dbReference type="GlyGen" id="Q8BGK2">
    <property type="glycosylation" value="1 site, 1 O-linked glycan (1 site)"/>
</dbReference>
<dbReference type="iPTMnet" id="Q8BGK2"/>
<dbReference type="PhosphoSitePlus" id="Q8BGK2"/>
<dbReference type="jPOST" id="Q8BGK2"/>
<dbReference type="PaxDb" id="10090-ENSMUSP00000033825"/>
<dbReference type="PeptideAtlas" id="Q8BGK2"/>
<dbReference type="ProteomicsDB" id="265092"/>
<dbReference type="Antibodypedia" id="25929">
    <property type="antibodies" value="62 antibodies from 18 providers"/>
</dbReference>
<dbReference type="DNASU" id="234072"/>
<dbReference type="Ensembl" id="ENSMUST00000033825.11">
    <property type="protein sequence ID" value="ENSMUSP00000033825.5"/>
    <property type="gene ID" value="ENSMUSG00000031448.13"/>
</dbReference>
<dbReference type="GeneID" id="234072"/>
<dbReference type="KEGG" id="mmu:234072"/>
<dbReference type="UCSC" id="uc009kxf.1">
    <property type="organism name" value="mouse"/>
</dbReference>
<dbReference type="AGR" id="MGI:2442168"/>
<dbReference type="CTD" id="113622"/>
<dbReference type="MGI" id="MGI:2442168">
    <property type="gene designation" value="Adprhl1"/>
</dbReference>
<dbReference type="VEuPathDB" id="HostDB:ENSMUSG00000031448"/>
<dbReference type="eggNOG" id="ENOG502QPMI">
    <property type="taxonomic scope" value="Eukaryota"/>
</dbReference>
<dbReference type="GeneTree" id="ENSGT00530000063627"/>
<dbReference type="HOGENOM" id="CLU_047061_0_0_1"/>
<dbReference type="InParanoid" id="Q8BGK2"/>
<dbReference type="PhylomeDB" id="Q8BGK2"/>
<dbReference type="TreeFam" id="TF329417"/>
<dbReference type="BioGRID-ORCS" id="234072">
    <property type="hits" value="0 hits in 78 CRISPR screens"/>
</dbReference>
<dbReference type="ChiTaRS" id="Ldlrap1">
    <property type="organism name" value="mouse"/>
</dbReference>
<dbReference type="PRO" id="PR:Q8BGK2"/>
<dbReference type="Proteomes" id="UP000000589">
    <property type="component" value="Chromosome 8"/>
</dbReference>
<dbReference type="RNAct" id="Q8BGK2">
    <property type="molecule type" value="protein"/>
</dbReference>
<dbReference type="Bgee" id="ENSMUSG00000031448">
    <property type="expression patterns" value="Expressed in myocardium of ventricle and 51 other cell types or tissues"/>
</dbReference>
<dbReference type="ExpressionAtlas" id="Q8BGK2">
    <property type="expression patterns" value="baseline and differential"/>
</dbReference>
<dbReference type="GO" id="GO:0030017">
    <property type="term" value="C:sarcomere"/>
    <property type="evidence" value="ECO:0000250"/>
    <property type="project" value="UniProtKB"/>
</dbReference>
<dbReference type="GO" id="GO:0003875">
    <property type="term" value="F:ADP-ribosylarginine hydrolase activity"/>
    <property type="evidence" value="ECO:0007669"/>
    <property type="project" value="InterPro"/>
</dbReference>
<dbReference type="GO" id="GO:0000287">
    <property type="term" value="F:magnesium ion binding"/>
    <property type="evidence" value="ECO:0007669"/>
    <property type="project" value="InterPro"/>
</dbReference>
<dbReference type="GO" id="GO:0003242">
    <property type="term" value="P:cardiac chamber ballooning"/>
    <property type="evidence" value="ECO:0000250"/>
    <property type="project" value="UniProtKB"/>
</dbReference>
<dbReference type="GO" id="GO:0055003">
    <property type="term" value="P:cardiac myofibril assembly"/>
    <property type="evidence" value="ECO:0000250"/>
    <property type="project" value="UniProtKB"/>
</dbReference>
<dbReference type="GO" id="GO:0051725">
    <property type="term" value="P:protein de-ADP-ribosylation"/>
    <property type="evidence" value="ECO:0007669"/>
    <property type="project" value="InterPro"/>
</dbReference>
<dbReference type="FunFam" id="1.10.4080.10:FF:000002">
    <property type="entry name" value="ADP-ribosylarginine hydrolase isoform X1"/>
    <property type="match status" value="1"/>
</dbReference>
<dbReference type="Gene3D" id="1.10.4080.10">
    <property type="entry name" value="ADP-ribosylation/Crystallin J1"/>
    <property type="match status" value="1"/>
</dbReference>
<dbReference type="InterPro" id="IPR012108">
    <property type="entry name" value="ADP-ribosylarg_hydro"/>
</dbReference>
<dbReference type="InterPro" id="IPR050792">
    <property type="entry name" value="ADP-ribosylglycohydrolase"/>
</dbReference>
<dbReference type="InterPro" id="IPR005502">
    <property type="entry name" value="Ribosyl_crysJ1"/>
</dbReference>
<dbReference type="InterPro" id="IPR036705">
    <property type="entry name" value="Ribosyl_crysJ1_sf"/>
</dbReference>
<dbReference type="PANTHER" id="PTHR16222">
    <property type="entry name" value="ADP-RIBOSYLGLYCOHYDROLASE"/>
    <property type="match status" value="1"/>
</dbReference>
<dbReference type="PANTHER" id="PTHR16222:SF23">
    <property type="entry name" value="INACTIVE ADP-RIBOSYLTRANSFERASE ARH2"/>
    <property type="match status" value="1"/>
</dbReference>
<dbReference type="Pfam" id="PF03747">
    <property type="entry name" value="ADP_ribosyl_GH"/>
    <property type="match status" value="1"/>
</dbReference>
<dbReference type="PIRSF" id="PIRSF016939">
    <property type="entry name" value="ADP_ribslarg_hdr"/>
    <property type="match status" value="1"/>
</dbReference>
<dbReference type="SUPFAM" id="SSF101478">
    <property type="entry name" value="ADP-ribosylglycohydrolase"/>
    <property type="match status" value="1"/>
</dbReference>
<evidence type="ECO:0000250" key="1">
    <source>
        <dbReference type="UniProtKB" id="Q6AZR2"/>
    </source>
</evidence>
<evidence type="ECO:0000269" key="2">
    <source>
    </source>
</evidence>
<evidence type="ECO:0000269" key="3">
    <source>
    </source>
</evidence>
<evidence type="ECO:0000305" key="4"/>
<evidence type="ECO:0007744" key="5">
    <source>
    </source>
</evidence>
<organism>
    <name type="scientific">Mus musculus</name>
    <name type="common">Mouse</name>
    <dbReference type="NCBI Taxonomy" id="10090"/>
    <lineage>
        <taxon>Eukaryota</taxon>
        <taxon>Metazoa</taxon>
        <taxon>Chordata</taxon>
        <taxon>Craniata</taxon>
        <taxon>Vertebrata</taxon>
        <taxon>Euteleostomi</taxon>
        <taxon>Mammalia</taxon>
        <taxon>Eutheria</taxon>
        <taxon>Euarchontoglires</taxon>
        <taxon>Glires</taxon>
        <taxon>Rodentia</taxon>
        <taxon>Myomorpha</taxon>
        <taxon>Muroidea</taxon>
        <taxon>Muridae</taxon>
        <taxon>Murinae</taxon>
        <taxon>Mus</taxon>
        <taxon>Mus</taxon>
    </lineage>
</organism>
<name>ARHL1_MOUSE</name>
<gene>
    <name type="primary">Adprhl1</name>
    <name type="synonym">Arh2</name>
</gene>
<reference key="1">
    <citation type="journal article" date="2002" name="Protein Sci.">
        <title>The family of toxin-related ecto-ADP-ribosyltransferases in humans and the mouse.</title>
        <authorList>
            <person name="Glowacki G."/>
            <person name="Braren R."/>
            <person name="Firner K."/>
            <person name="Nissen M."/>
            <person name="Kuehl M."/>
            <person name="Reche P."/>
            <person name="Bazan J.F."/>
            <person name="Cetkovic-Cvrlje M."/>
            <person name="Leiter E."/>
            <person name="Haag F."/>
            <person name="Koch-Nolte F."/>
        </authorList>
    </citation>
    <scope>NUCLEOTIDE SEQUENCE [MRNA]</scope>
    <source>
        <strain>C57BL/6J</strain>
    </source>
</reference>
<reference key="2">
    <citation type="journal article" date="2005" name="Science">
        <title>The transcriptional landscape of the mammalian genome.</title>
        <authorList>
            <person name="Carninci P."/>
            <person name="Kasukawa T."/>
            <person name="Katayama S."/>
            <person name="Gough J."/>
            <person name="Frith M.C."/>
            <person name="Maeda N."/>
            <person name="Oyama R."/>
            <person name="Ravasi T."/>
            <person name="Lenhard B."/>
            <person name="Wells C."/>
            <person name="Kodzius R."/>
            <person name="Shimokawa K."/>
            <person name="Bajic V.B."/>
            <person name="Brenner S.E."/>
            <person name="Batalov S."/>
            <person name="Forrest A.R."/>
            <person name="Zavolan M."/>
            <person name="Davis M.J."/>
            <person name="Wilming L.G."/>
            <person name="Aidinis V."/>
            <person name="Allen J.E."/>
            <person name="Ambesi-Impiombato A."/>
            <person name="Apweiler R."/>
            <person name="Aturaliya R.N."/>
            <person name="Bailey T.L."/>
            <person name="Bansal M."/>
            <person name="Baxter L."/>
            <person name="Beisel K.W."/>
            <person name="Bersano T."/>
            <person name="Bono H."/>
            <person name="Chalk A.M."/>
            <person name="Chiu K.P."/>
            <person name="Choudhary V."/>
            <person name="Christoffels A."/>
            <person name="Clutterbuck D.R."/>
            <person name="Crowe M.L."/>
            <person name="Dalla E."/>
            <person name="Dalrymple B.P."/>
            <person name="de Bono B."/>
            <person name="Della Gatta G."/>
            <person name="di Bernardo D."/>
            <person name="Down T."/>
            <person name="Engstrom P."/>
            <person name="Fagiolini M."/>
            <person name="Faulkner G."/>
            <person name="Fletcher C.F."/>
            <person name="Fukushima T."/>
            <person name="Furuno M."/>
            <person name="Futaki S."/>
            <person name="Gariboldi M."/>
            <person name="Georgii-Hemming P."/>
            <person name="Gingeras T.R."/>
            <person name="Gojobori T."/>
            <person name="Green R.E."/>
            <person name="Gustincich S."/>
            <person name="Harbers M."/>
            <person name="Hayashi Y."/>
            <person name="Hensch T.K."/>
            <person name="Hirokawa N."/>
            <person name="Hill D."/>
            <person name="Huminiecki L."/>
            <person name="Iacono M."/>
            <person name="Ikeo K."/>
            <person name="Iwama A."/>
            <person name="Ishikawa T."/>
            <person name="Jakt M."/>
            <person name="Kanapin A."/>
            <person name="Katoh M."/>
            <person name="Kawasawa Y."/>
            <person name="Kelso J."/>
            <person name="Kitamura H."/>
            <person name="Kitano H."/>
            <person name="Kollias G."/>
            <person name="Krishnan S.P."/>
            <person name="Kruger A."/>
            <person name="Kummerfeld S.K."/>
            <person name="Kurochkin I.V."/>
            <person name="Lareau L.F."/>
            <person name="Lazarevic D."/>
            <person name="Lipovich L."/>
            <person name="Liu J."/>
            <person name="Liuni S."/>
            <person name="McWilliam S."/>
            <person name="Madan Babu M."/>
            <person name="Madera M."/>
            <person name="Marchionni L."/>
            <person name="Matsuda H."/>
            <person name="Matsuzawa S."/>
            <person name="Miki H."/>
            <person name="Mignone F."/>
            <person name="Miyake S."/>
            <person name="Morris K."/>
            <person name="Mottagui-Tabar S."/>
            <person name="Mulder N."/>
            <person name="Nakano N."/>
            <person name="Nakauchi H."/>
            <person name="Ng P."/>
            <person name="Nilsson R."/>
            <person name="Nishiguchi S."/>
            <person name="Nishikawa S."/>
            <person name="Nori F."/>
            <person name="Ohara O."/>
            <person name="Okazaki Y."/>
            <person name="Orlando V."/>
            <person name="Pang K.C."/>
            <person name="Pavan W.J."/>
            <person name="Pavesi G."/>
            <person name="Pesole G."/>
            <person name="Petrovsky N."/>
            <person name="Piazza S."/>
            <person name="Reed J."/>
            <person name="Reid J.F."/>
            <person name="Ring B.Z."/>
            <person name="Ringwald M."/>
            <person name="Rost B."/>
            <person name="Ruan Y."/>
            <person name="Salzberg S.L."/>
            <person name="Sandelin A."/>
            <person name="Schneider C."/>
            <person name="Schoenbach C."/>
            <person name="Sekiguchi K."/>
            <person name="Semple C.A."/>
            <person name="Seno S."/>
            <person name="Sessa L."/>
            <person name="Sheng Y."/>
            <person name="Shibata Y."/>
            <person name="Shimada H."/>
            <person name="Shimada K."/>
            <person name="Silva D."/>
            <person name="Sinclair B."/>
            <person name="Sperling S."/>
            <person name="Stupka E."/>
            <person name="Sugiura K."/>
            <person name="Sultana R."/>
            <person name="Takenaka Y."/>
            <person name="Taki K."/>
            <person name="Tammoja K."/>
            <person name="Tan S.L."/>
            <person name="Tang S."/>
            <person name="Taylor M.S."/>
            <person name="Tegner J."/>
            <person name="Teichmann S.A."/>
            <person name="Ueda H.R."/>
            <person name="van Nimwegen E."/>
            <person name="Verardo R."/>
            <person name="Wei C.L."/>
            <person name="Yagi K."/>
            <person name="Yamanishi H."/>
            <person name="Zabarovsky E."/>
            <person name="Zhu S."/>
            <person name="Zimmer A."/>
            <person name="Hide W."/>
            <person name="Bult C."/>
            <person name="Grimmond S.M."/>
            <person name="Teasdale R.D."/>
            <person name="Liu E.T."/>
            <person name="Brusic V."/>
            <person name="Quackenbush J."/>
            <person name="Wahlestedt C."/>
            <person name="Mattick J.S."/>
            <person name="Hume D.A."/>
            <person name="Kai C."/>
            <person name="Sasaki D."/>
            <person name="Tomaru Y."/>
            <person name="Fukuda S."/>
            <person name="Kanamori-Katayama M."/>
            <person name="Suzuki M."/>
            <person name="Aoki J."/>
            <person name="Arakawa T."/>
            <person name="Iida J."/>
            <person name="Imamura K."/>
            <person name="Itoh M."/>
            <person name="Kato T."/>
            <person name="Kawaji H."/>
            <person name="Kawagashira N."/>
            <person name="Kawashima T."/>
            <person name="Kojima M."/>
            <person name="Kondo S."/>
            <person name="Konno H."/>
            <person name="Nakano K."/>
            <person name="Ninomiya N."/>
            <person name="Nishio T."/>
            <person name="Okada M."/>
            <person name="Plessy C."/>
            <person name="Shibata K."/>
            <person name="Shiraki T."/>
            <person name="Suzuki S."/>
            <person name="Tagami M."/>
            <person name="Waki K."/>
            <person name="Watahiki A."/>
            <person name="Okamura-Oho Y."/>
            <person name="Suzuki H."/>
            <person name="Kawai J."/>
            <person name="Hayashizaki Y."/>
        </authorList>
    </citation>
    <scope>NUCLEOTIDE SEQUENCE [LARGE SCALE MRNA]</scope>
    <source>
        <strain>C57BL/6J</strain>
        <tissue>Head</tissue>
        <tissue>Heart</tissue>
    </source>
</reference>
<reference key="3">
    <citation type="journal article" date="2004" name="Genome Res.">
        <title>The status, quality, and expansion of the NIH full-length cDNA project: the Mammalian Gene Collection (MGC).</title>
        <authorList>
            <consortium name="The MGC Project Team"/>
        </authorList>
    </citation>
    <scope>NUCLEOTIDE SEQUENCE [LARGE SCALE MRNA]</scope>
    <source>
        <tissue>Jaw</tissue>
        <tissue>Limb</tissue>
    </source>
</reference>
<reference key="4">
    <citation type="journal article" date="2006" name="Proc. Natl. Acad. Sci. U.S.A.">
        <title>The 39-kDa poly(ADP-ribose) glycohydrolase ARH3 hydrolyzes O-acetyl-ADP-ribose, a product of the Sir2 family of acetyl-histone deacetylases.</title>
        <authorList>
            <person name="Ono T."/>
            <person name="Kasamatsu A."/>
            <person name="Oka S."/>
            <person name="Moss J."/>
        </authorList>
    </citation>
    <scope>FUNCTION</scope>
</reference>
<reference key="5">
    <citation type="journal article" date="2010" name="Cell">
        <title>A tissue-specific atlas of mouse protein phosphorylation and expression.</title>
        <authorList>
            <person name="Huttlin E.L."/>
            <person name="Jedrychowski M.P."/>
            <person name="Elias J.E."/>
            <person name="Goswami T."/>
            <person name="Rad R."/>
            <person name="Beausoleil S.A."/>
            <person name="Villen J."/>
            <person name="Haas W."/>
            <person name="Sowa M.E."/>
            <person name="Gygi S.P."/>
        </authorList>
    </citation>
    <scope>PHOSPHORYLATION [LARGE SCALE ANALYSIS] AT SER-27</scope>
    <scope>IDENTIFICATION BY MASS SPECTROMETRY [LARGE SCALE ANALYSIS]</scope>
    <source>
        <tissue>Heart</tissue>
    </source>
</reference>
<reference key="6">
    <citation type="journal article" date="2016" name="Dev. Biol.">
        <title>The cardiac-restricted protein ADP-ribosylhydrolase-like 1 is essential for heart chamber outgrowth and acts on muscle actin filament assembly.</title>
        <authorList>
            <person name="Smith S.J."/>
            <person name="Towers N."/>
            <person name="Saldanha J.W."/>
            <person name="Shang C.A."/>
            <person name="Mahmood S.R."/>
            <person name="Taylor W.R."/>
            <person name="Mohun T.J."/>
        </authorList>
    </citation>
    <scope>TISSUE SPECIFICITY</scope>
</reference>
<comment type="function">
    <text evidence="1 2">Required for myofibril assembly and outgrowth of the cardiac chambers in the developing heart (By similarity). Appears to be catalytically inactive, showing no activity against O-acetyl-ADP-ribose (PubMed:17075046).</text>
</comment>
<comment type="subcellular location">
    <subcellularLocation>
        <location evidence="1">Cytoplasm</location>
        <location evidence="1">Myofibril</location>
        <location evidence="1">Sarcomere</location>
    </subcellularLocation>
</comment>
<comment type="tissue specificity">
    <text evidence="3">Expressed in the embryonic heart at E11.5.</text>
</comment>
<comment type="similarity">
    <text evidence="4">Belongs to the ADP-ribosylglycohydrolase family.</text>
</comment>
<comment type="caution">
    <text evidence="1">Although it belongs to the ADP-ribosylglycohydrolase family, lacks the metal-binding and substrate-binding residues, suggesting that it has no hydrolase activity.</text>
</comment>
<comment type="sequence caution" evidence="4">
    <conflict type="erroneous initiation">
        <sequence resource="EMBL-CDS" id="BAC38332"/>
    </conflict>
</comment>
<sequence length="353" mass="39885">MEKFKAAMLLGSVGDALGYGNICRENSVLGSIQEELQKTGGLDSLVLSPGRWPVSDNTIMHMATAEALTTDYWCLDDLYREMVKRYVETVETLSEHRPDPSTIEGCSQLKPDNYLLAWHTPFSEKGSGFGAATKAMCIGMRYWKPERLETLIEVSIECGRMTHNHPTGFLGSLCTALFASYALQGKPLVQWGREMLKVLPLAEEYCRKTIRHMAEYQEHWFYFEAKWQFYLEERKIREDAEDKVTFPDNYDAEERDKTYKKWSSEGRGGRRGHDAPMIAYDALLASGSNWTELCQRAMFHGGESGATGTIAGCLFGLLHGLATVPRGLYQELEHKGRLEDLGAALHRLSTEEK</sequence>
<keyword id="KW-0963">Cytoplasm</keyword>
<keyword id="KW-0597">Phosphoprotein</keyword>
<keyword id="KW-1185">Reference proteome</keyword>
<feature type="chain" id="PRO_0000277607" description="Inactive ADP-ribosyltransferase ARH2">
    <location>
        <begin position="1"/>
        <end position="353"/>
    </location>
</feature>
<feature type="modified residue" description="Phosphoserine" evidence="5">
    <location>
        <position position="27"/>
    </location>
</feature>
<proteinExistence type="evidence at protein level"/>
<accession>Q8BGK2</accession>
<accession>Q8C4L0</accession>